<keyword id="KW-0025">Alternative splicing</keyword>
<keyword id="KW-1185">Reference proteome</keyword>
<organism>
    <name type="scientific">Homo sapiens</name>
    <name type="common">Human</name>
    <dbReference type="NCBI Taxonomy" id="9606"/>
    <lineage>
        <taxon>Eukaryota</taxon>
        <taxon>Metazoa</taxon>
        <taxon>Chordata</taxon>
        <taxon>Craniata</taxon>
        <taxon>Vertebrata</taxon>
        <taxon>Euteleostomi</taxon>
        <taxon>Mammalia</taxon>
        <taxon>Eutheria</taxon>
        <taxon>Euarchontoglires</taxon>
        <taxon>Primates</taxon>
        <taxon>Haplorrhini</taxon>
        <taxon>Catarrhini</taxon>
        <taxon>Hominidae</taxon>
        <taxon>Homo</taxon>
    </lineage>
</organism>
<protein>
    <recommendedName>
        <fullName>Talanin</fullName>
    </recommendedName>
</protein>
<reference key="1">
    <citation type="journal article" date="2003" name="Am. J. Hum. Genet.">
        <title>Identification of a novel gene and a common variant associated with uric acid nephrolithiasis in a Sardinian genetic isolate.</title>
        <authorList>
            <person name="Gianfrancesco F."/>
            <person name="Esposito T."/>
            <person name="Ombra M.N."/>
            <person name="Forabosco P."/>
            <person name="Maninchedda G."/>
            <person name="Fattorini M."/>
            <person name="Casula S."/>
            <person name="Vaccargiu S."/>
            <person name="Casu G."/>
            <person name="Cardia F."/>
            <person name="Deiana I."/>
            <person name="Melis P."/>
            <person name="Falchi M."/>
            <person name="Pirastu M."/>
        </authorList>
    </citation>
    <scope>NUCLEOTIDE SEQUENCE [MRNA] (ISOFORM 4)</scope>
    <scope>TISSUE SPECIFICITY</scope>
    <scope>INVOLVEMENT IN UAN</scope>
    <scope>VARIANT ALA-62</scope>
    <source>
        <tissue>Kidney</tissue>
    </source>
</reference>
<reference key="2">
    <citation type="journal article" date="2004" name="Nature">
        <title>The DNA sequence and comparative analysis of human chromosome 10.</title>
        <authorList>
            <person name="Deloukas P."/>
            <person name="Earthrowl M.E."/>
            <person name="Grafham D.V."/>
            <person name="Rubenfield M."/>
            <person name="French L."/>
            <person name="Steward C.A."/>
            <person name="Sims S.K."/>
            <person name="Jones M.C."/>
            <person name="Searle S."/>
            <person name="Scott C."/>
            <person name="Howe K."/>
            <person name="Hunt S.E."/>
            <person name="Andrews T.D."/>
            <person name="Gilbert J.G.R."/>
            <person name="Swarbreck D."/>
            <person name="Ashurst J.L."/>
            <person name="Taylor A."/>
            <person name="Battles J."/>
            <person name="Bird C.P."/>
            <person name="Ainscough R."/>
            <person name="Almeida J.P."/>
            <person name="Ashwell R.I.S."/>
            <person name="Ambrose K.D."/>
            <person name="Babbage A.K."/>
            <person name="Bagguley C.L."/>
            <person name="Bailey J."/>
            <person name="Banerjee R."/>
            <person name="Bates K."/>
            <person name="Beasley H."/>
            <person name="Bray-Allen S."/>
            <person name="Brown A.J."/>
            <person name="Brown J.Y."/>
            <person name="Burford D.C."/>
            <person name="Burrill W."/>
            <person name="Burton J."/>
            <person name="Cahill P."/>
            <person name="Camire D."/>
            <person name="Carter N.P."/>
            <person name="Chapman J.C."/>
            <person name="Clark S.Y."/>
            <person name="Clarke G."/>
            <person name="Clee C.M."/>
            <person name="Clegg S."/>
            <person name="Corby N."/>
            <person name="Coulson A."/>
            <person name="Dhami P."/>
            <person name="Dutta I."/>
            <person name="Dunn M."/>
            <person name="Faulkner L."/>
            <person name="Frankish A."/>
            <person name="Frankland J.A."/>
            <person name="Garner P."/>
            <person name="Garnett J."/>
            <person name="Gribble S."/>
            <person name="Griffiths C."/>
            <person name="Grocock R."/>
            <person name="Gustafson E."/>
            <person name="Hammond S."/>
            <person name="Harley J.L."/>
            <person name="Hart E."/>
            <person name="Heath P.D."/>
            <person name="Ho T.P."/>
            <person name="Hopkins B."/>
            <person name="Horne J."/>
            <person name="Howden P.J."/>
            <person name="Huckle E."/>
            <person name="Hynds C."/>
            <person name="Johnson C."/>
            <person name="Johnson D."/>
            <person name="Kana A."/>
            <person name="Kay M."/>
            <person name="Kimberley A.M."/>
            <person name="Kershaw J.K."/>
            <person name="Kokkinaki M."/>
            <person name="Laird G.K."/>
            <person name="Lawlor S."/>
            <person name="Lee H.M."/>
            <person name="Leongamornlert D.A."/>
            <person name="Laird G."/>
            <person name="Lloyd C."/>
            <person name="Lloyd D.M."/>
            <person name="Loveland J."/>
            <person name="Lovell J."/>
            <person name="McLaren S."/>
            <person name="McLay K.E."/>
            <person name="McMurray A."/>
            <person name="Mashreghi-Mohammadi M."/>
            <person name="Matthews L."/>
            <person name="Milne S."/>
            <person name="Nickerson T."/>
            <person name="Nguyen M."/>
            <person name="Overton-Larty E."/>
            <person name="Palmer S.A."/>
            <person name="Pearce A.V."/>
            <person name="Peck A.I."/>
            <person name="Pelan S."/>
            <person name="Phillimore B."/>
            <person name="Porter K."/>
            <person name="Rice C.M."/>
            <person name="Rogosin A."/>
            <person name="Ross M.T."/>
            <person name="Sarafidou T."/>
            <person name="Sehra H.K."/>
            <person name="Shownkeen R."/>
            <person name="Skuce C.D."/>
            <person name="Smith M."/>
            <person name="Standring L."/>
            <person name="Sycamore N."/>
            <person name="Tester J."/>
            <person name="Thorpe A."/>
            <person name="Torcasso W."/>
            <person name="Tracey A."/>
            <person name="Tromans A."/>
            <person name="Tsolas J."/>
            <person name="Wall M."/>
            <person name="Walsh J."/>
            <person name="Wang H."/>
            <person name="Weinstock K."/>
            <person name="West A.P."/>
            <person name="Willey D.L."/>
            <person name="Whitehead S.L."/>
            <person name="Wilming L."/>
            <person name="Wray P.W."/>
            <person name="Young L."/>
            <person name="Chen Y."/>
            <person name="Lovering R.C."/>
            <person name="Moschonas N.K."/>
            <person name="Siebert R."/>
            <person name="Fechtel K."/>
            <person name="Bentley D."/>
            <person name="Durbin R.M."/>
            <person name="Hubbard T."/>
            <person name="Doucette-Stamm L."/>
            <person name="Beck S."/>
            <person name="Smith D.R."/>
            <person name="Rogers J."/>
        </authorList>
    </citation>
    <scope>NUCLEOTIDE SEQUENCE [LARGE SCALE GENOMIC DNA]</scope>
</reference>
<reference key="3">
    <citation type="journal article" date="2004" name="Gene">
        <title>Emergence of talanin protein associated with human uric acid nephrolithiasis in the hominidae lineage.</title>
        <authorList>
            <person name="Gianfrancesco F."/>
            <person name="Esposito T."/>
            <person name="Casu G."/>
            <person name="Maninchedda G."/>
            <person name="Roberto R."/>
            <person name="Parastu M."/>
        </authorList>
    </citation>
    <scope>ALTERNATIVE SPLICING</scope>
</reference>
<evidence type="ECO:0000269" key="1">
    <source>
    </source>
</evidence>
<proteinExistence type="evidence at transcript level"/>
<name>TALAN_HUMAN</name>
<dbReference type="EMBL" id="AJ505150">
    <property type="protein sequence ID" value="CAD43729.1"/>
    <property type="molecule type" value="mRNA"/>
</dbReference>
<dbReference type="EMBL" id="AC067751">
    <property type="status" value="NOT_ANNOTATED_CDS"/>
    <property type="molecule type" value="Genomic_DNA"/>
</dbReference>
<dbReference type="RefSeq" id="NP_955524.3">
    <property type="nucleotide sequence ID" value="NM_199452.3"/>
</dbReference>
<dbReference type="BioGRID" id="116557">
    <property type="interactions" value="17"/>
</dbReference>
<dbReference type="IntAct" id="Q70YC4">
    <property type="interactions" value="4"/>
</dbReference>
<dbReference type="BioMuta" id="ZNF365"/>
<dbReference type="MassIVE" id="Q70YC4"/>
<dbReference type="DNASU" id="22891"/>
<dbReference type="UCSC" id="uc001jmd.1">
    <molecule id="Q70YC4-1"/>
    <property type="organism name" value="human"/>
</dbReference>
<dbReference type="AGR" id="HGNC:18194"/>
<dbReference type="DisGeNET" id="22891"/>
<dbReference type="GeneCards" id="ZNF365"/>
<dbReference type="HGNC" id="HGNC:18194">
    <property type="gene designation" value="ZNF365"/>
</dbReference>
<dbReference type="MalaCards" id="ZNF365"/>
<dbReference type="MIM" id="605990">
    <property type="type" value="phenotype"/>
</dbReference>
<dbReference type="MIM" id="607818">
    <property type="type" value="gene"/>
</dbReference>
<dbReference type="neXtProt" id="NX_Q70YC4"/>
<dbReference type="PharmGKB" id="PA134873576"/>
<dbReference type="HOGENOM" id="CLU_118865_0_0_1"/>
<dbReference type="OrthoDB" id="271433at2759"/>
<dbReference type="PathwayCommons" id="Q70YC4"/>
<dbReference type="SignaLink" id="Q70YC4"/>
<dbReference type="BioGRID-ORCS" id="22891">
    <property type="hits" value="10 hits in 1148 CRISPR screens"/>
</dbReference>
<dbReference type="ChiTaRS" id="ZNF365">
    <property type="organism name" value="human"/>
</dbReference>
<dbReference type="GeneWiki" id="ZNF365"/>
<dbReference type="GenomeRNAi" id="22891"/>
<dbReference type="Pharos" id="Q70YC4">
    <property type="development level" value="Tbio"/>
</dbReference>
<dbReference type="Proteomes" id="UP000005640">
    <property type="component" value="Chromosome 10"/>
</dbReference>
<dbReference type="GO" id="GO:0005813">
    <property type="term" value="C:centrosome"/>
    <property type="evidence" value="ECO:0000314"/>
    <property type="project" value="MGI"/>
</dbReference>
<dbReference type="GO" id="GO:0042803">
    <property type="term" value="F:protein homodimerization activity"/>
    <property type="evidence" value="ECO:0000314"/>
    <property type="project" value="MGI"/>
</dbReference>
<dbReference type="GO" id="GO:0033566">
    <property type="term" value="P:gamma-tubulin complex localization"/>
    <property type="evidence" value="ECO:0000315"/>
    <property type="project" value="MGI"/>
</dbReference>
<dbReference type="GO" id="GO:0000281">
    <property type="term" value="P:mitotic cytokinesis"/>
    <property type="evidence" value="ECO:0000315"/>
    <property type="project" value="MGI"/>
</dbReference>
<gene>
    <name type="primary">ZNF365</name>
    <name type="synonym">KIAA0844</name>
</gene>
<feature type="chain" id="PRO_0000076378" description="Talanin">
    <location>
        <begin position="1"/>
        <end position="216"/>
    </location>
</feature>
<feature type="sequence variant" id="VAR_024326" description="In dbSNP:rs7076156." evidence="1">
    <original>T</original>
    <variation>A</variation>
    <location>
        <position position="62"/>
    </location>
</feature>
<accession>Q70YC4</accession>
<sequence length="216" mass="24036">MSALGQITITVSRCWNTERNQTDKNPCLHGAYLQLRETVKNKSTHLKKPLMKQAPPWKDHLTFQPLHPAERKTQVWRWQSGNSSDLETTSSASPWPTGSNRDVVLNTLAESCCGLSELITAPPYAGVSIQGFSQIWVLFPFCGGTFHHNEKDVLGLQDFERESVSTSQSRNISLLTLGQLQNCVIGKLTIIDLLTEHLLGVRHGVICFPWGLPSSS</sequence>
<comment type="function">
    <text>May play a role in uric acid excretion.</text>
</comment>
<comment type="alternative products">
    <event type="alternative splicing"/>
    <isoform>
        <id>Q70YC4-1</id>
        <name>4</name>
        <name>Talanin</name>
        <name>ZNF365D</name>
        <sequence type="displayed"/>
    </isoform>
    <isoform>
        <id>Q70YC5-1</id>
        <name>1</name>
        <name>ZNF365A</name>
        <sequence type="external"/>
    </isoform>
    <isoform>
        <id>Q70YC5-2</id>
        <name>2</name>
        <name>ZNF365B</name>
        <sequence type="external"/>
    </isoform>
    <isoform>
        <id>Q70YC5-3</id>
        <name>3</name>
        <name>ZNF365C</name>
        <sequence type="external"/>
    </isoform>
    <isoform>
        <id>Q70YC5-4</id>
        <name>5</name>
        <sequence type="external"/>
    </isoform>
    <isoform>
        <id>Q70YC5-5</id>
        <name>6</name>
        <sequence type="external"/>
    </isoform>
    <text>Additional isoforms seem to exist.</text>
</comment>
<comment type="tissue specificity">
    <text evidence="1">Isoform 4 is expressed in placenta, lung, kidney and pancreas.</text>
</comment>
<comment type="polymorphism">
    <text evidence="1">Thr-62 is associated with increased risk for uric acid nephrolithiasis.</text>
</comment>
<comment type="disease" evidence="1">
    <disease id="DI-02839">
        <name>Uric acid nephrolithiasis</name>
        <acronym>UAN</acronym>
        <description>A form of nephrolithiasis, a common multifactorial disease characterized by stones formation in the kidney and urinary tract. Nephrolithiasis is due to supersaturation of the urine by stone-forming constituents, including calcium, oxalate and uric acid. Crystals or foreign bodies can act as nidi, upon which ions from the supersaturated urine form microscopic crystalline structures. Uric acid nephrolithiasis occurs when the urine becomes overly concentrated with uric acid and accounts for 20% of all stones.</description>
        <dbReference type="MIM" id="605990"/>
    </disease>
    <text>Disease susceptibility is associated with variants affecting the gene represented in this entry.</text>
</comment>
<comment type="miscellaneous">
    <text>Isoform 4 (talanin) of ZNF365 does not exist in rodents. In primates, a canonical intron-exon structure exist, with several stop codons preventing talanin production in old world and new world monkeys. It seems therefore that isoform 4 transcript emerged during primate evolution from a noncoding genomic sequence.</text>
</comment>